<reference key="1">
    <citation type="journal article" date="1995" name="Science">
        <title>Whole-genome random sequencing and assembly of Haemophilus influenzae Rd.</title>
        <authorList>
            <person name="Fleischmann R.D."/>
            <person name="Adams M.D."/>
            <person name="White O."/>
            <person name="Clayton R.A."/>
            <person name="Kirkness E.F."/>
            <person name="Kerlavage A.R."/>
            <person name="Bult C.J."/>
            <person name="Tomb J.-F."/>
            <person name="Dougherty B.A."/>
            <person name="Merrick J.M."/>
            <person name="McKenney K."/>
            <person name="Sutton G.G."/>
            <person name="FitzHugh W."/>
            <person name="Fields C.A."/>
            <person name="Gocayne J.D."/>
            <person name="Scott J.D."/>
            <person name="Shirley R."/>
            <person name="Liu L.-I."/>
            <person name="Glodek A."/>
            <person name="Kelley J.M."/>
            <person name="Weidman J.F."/>
            <person name="Phillips C.A."/>
            <person name="Spriggs T."/>
            <person name="Hedblom E."/>
            <person name="Cotton M.D."/>
            <person name="Utterback T.R."/>
            <person name="Hanna M.C."/>
            <person name="Nguyen D.T."/>
            <person name="Saudek D.M."/>
            <person name="Brandon R.C."/>
            <person name="Fine L.D."/>
            <person name="Fritchman J.L."/>
            <person name="Fuhrmann J.L."/>
            <person name="Geoghagen N.S.M."/>
            <person name="Gnehm C.L."/>
            <person name="McDonald L.A."/>
            <person name="Small K.V."/>
            <person name="Fraser C.M."/>
            <person name="Smith H.O."/>
            <person name="Venter J.C."/>
        </authorList>
    </citation>
    <scope>NUCLEOTIDE SEQUENCE [LARGE SCALE GENOMIC DNA]</scope>
    <source>
        <strain>ATCC 51907 / DSM 11121 / KW20 / Rd</strain>
    </source>
</reference>
<reference key="2">
    <citation type="journal article" date="2000" name="Electrophoresis">
        <title>Two-dimensional map of the proteome of Haemophilus influenzae.</title>
        <authorList>
            <person name="Langen H."/>
            <person name="Takacs B."/>
            <person name="Evers S."/>
            <person name="Berndt P."/>
            <person name="Lahm H.W."/>
            <person name="Wipf B."/>
            <person name="Gray C."/>
            <person name="Fountoulakis M."/>
        </authorList>
    </citation>
    <scope>IDENTIFICATION BY MASS SPECTROMETRY</scope>
    <source>
        <strain>ATCC 51907 / DSM 11121 / KW20 / Rd</strain>
    </source>
</reference>
<protein>
    <recommendedName>
        <fullName>Probable phosphomannomutase</fullName>
        <shortName>PMM</shortName>
        <ecNumber>5.4.2.8</ecNumber>
    </recommendedName>
</protein>
<proteinExistence type="evidence at protein level"/>
<comment type="catalytic activity">
    <reaction>
        <text>alpha-D-mannose 1-phosphate = D-mannose 6-phosphate</text>
        <dbReference type="Rhea" id="RHEA:11140"/>
        <dbReference type="ChEBI" id="CHEBI:58409"/>
        <dbReference type="ChEBI" id="CHEBI:58735"/>
        <dbReference type="EC" id="5.4.2.8"/>
    </reaction>
</comment>
<comment type="cofactor">
    <cofactor evidence="1">
        <name>Mg(2+)</name>
        <dbReference type="ChEBI" id="CHEBI:18420"/>
    </cofactor>
    <text evidence="1">Binds 1 Mg(2+) ion per subunit.</text>
</comment>
<comment type="similarity">
    <text evidence="2">Belongs to the phosphohexose mutase family.</text>
</comment>
<accession>Q57290</accession>
<accession>O05032</accession>
<sequence length="485" mass="52568">MGMNRVLVSQAAGGLAEYLKGYDKEPSIVIGYDGRKNSDVFARDTAEIMAGAGVKAYLLPRKLPTPVLAYAIQYFDTTAGVMVTASHNPPEDNGYKVYLGKANGGGQIVSPADKDIAALIDKVAAGNIQDLPRSDNYVVLNDEVVDAYITKTASLAKEPACDINYVYTAMHGVGYEVLSKTLAKAGLPQPHVVADQVWPDGTFPTVNFPNPEEKGALDLAIKVAKEKNAEFIIANDPDADRLAVAVPDAQGNWKSLHGNVVGCFLGWYLAKQYQGKQGTLACSLVSSPALAEIAKKYSFQSEETLTGFKYIGKVSGLLFGFEEALGYLVDPDKVRDKDGISAAIVFLDLVRNLKKQGKTLADYADEFTKEFGAYVSGQISIRVSDLSEIGKLMTALRNNPPAEIAGVKVAQFIDHIKTDRQSDILVFNLENGGRLIARPSGTEPKIKFYLDARGKDPKDADRVLAEFDEGVRHILRQDAYGKQDC</sequence>
<dbReference type="EC" id="5.4.2.8"/>
<dbReference type="EMBL" id="L42023">
    <property type="protein sequence ID" value="AAC22400.1"/>
    <property type="molecule type" value="Genomic_DNA"/>
</dbReference>
<dbReference type="PIR" id="I64157">
    <property type="entry name" value="I64157"/>
</dbReference>
<dbReference type="RefSeq" id="NP_438900.2">
    <property type="nucleotide sequence ID" value="NC_000907.1"/>
</dbReference>
<dbReference type="SMR" id="Q57290"/>
<dbReference type="STRING" id="71421.HI_0740"/>
<dbReference type="EnsemblBacteria" id="AAC22400">
    <property type="protein sequence ID" value="AAC22400"/>
    <property type="gene ID" value="HI_0740"/>
</dbReference>
<dbReference type="KEGG" id="hin:HI_0740"/>
<dbReference type="PATRIC" id="fig|71421.8.peg.777"/>
<dbReference type="eggNOG" id="COG1109">
    <property type="taxonomic scope" value="Bacteria"/>
</dbReference>
<dbReference type="HOGENOM" id="CLU_016950_0_2_6"/>
<dbReference type="OrthoDB" id="9806956at2"/>
<dbReference type="PhylomeDB" id="Q57290"/>
<dbReference type="Proteomes" id="UP000000579">
    <property type="component" value="Chromosome"/>
</dbReference>
<dbReference type="GO" id="GO:0000287">
    <property type="term" value="F:magnesium ion binding"/>
    <property type="evidence" value="ECO:0007669"/>
    <property type="project" value="InterPro"/>
</dbReference>
<dbReference type="GO" id="GO:0004615">
    <property type="term" value="F:phosphomannomutase activity"/>
    <property type="evidence" value="ECO:0007669"/>
    <property type="project" value="UniProtKB-EC"/>
</dbReference>
<dbReference type="GO" id="GO:0008973">
    <property type="term" value="F:phosphopentomutase activity"/>
    <property type="evidence" value="ECO:0000318"/>
    <property type="project" value="GO_Central"/>
</dbReference>
<dbReference type="GO" id="GO:0005975">
    <property type="term" value="P:carbohydrate metabolic process"/>
    <property type="evidence" value="ECO:0007669"/>
    <property type="project" value="InterPro"/>
</dbReference>
<dbReference type="GO" id="GO:0006166">
    <property type="term" value="P:purine ribonucleoside salvage"/>
    <property type="evidence" value="ECO:0000318"/>
    <property type="project" value="GO_Central"/>
</dbReference>
<dbReference type="CDD" id="cd05799">
    <property type="entry name" value="PGM2"/>
    <property type="match status" value="1"/>
</dbReference>
<dbReference type="Gene3D" id="3.40.120.10">
    <property type="entry name" value="Alpha-D-Glucose-1,6-Bisphosphate, subunit A, domain 3"/>
    <property type="match status" value="3"/>
</dbReference>
<dbReference type="Gene3D" id="3.30.310.50">
    <property type="entry name" value="Alpha-D-phosphohexomutase, C-terminal domain"/>
    <property type="match status" value="1"/>
</dbReference>
<dbReference type="InterPro" id="IPR005844">
    <property type="entry name" value="A-D-PHexomutase_a/b/a-I"/>
</dbReference>
<dbReference type="InterPro" id="IPR016055">
    <property type="entry name" value="A-D-PHexomutase_a/b/a-I/II/III"/>
</dbReference>
<dbReference type="InterPro" id="IPR005845">
    <property type="entry name" value="A-D-PHexomutase_a/b/a-II"/>
</dbReference>
<dbReference type="InterPro" id="IPR005846">
    <property type="entry name" value="A-D-PHexomutase_a/b/a-III"/>
</dbReference>
<dbReference type="InterPro" id="IPR005843">
    <property type="entry name" value="A-D-PHexomutase_C"/>
</dbReference>
<dbReference type="InterPro" id="IPR036900">
    <property type="entry name" value="A-D-PHexomutase_C_sf"/>
</dbReference>
<dbReference type="InterPro" id="IPR016066">
    <property type="entry name" value="A-D-PHexomutase_CS"/>
</dbReference>
<dbReference type="InterPro" id="IPR005841">
    <property type="entry name" value="Alpha-D-phosphohexomutase_SF"/>
</dbReference>
<dbReference type="PANTHER" id="PTHR45745:SF1">
    <property type="entry name" value="PHOSPHOGLUCOMUTASE 2B-RELATED"/>
    <property type="match status" value="1"/>
</dbReference>
<dbReference type="PANTHER" id="PTHR45745">
    <property type="entry name" value="PHOSPHOMANNOMUTASE 45A"/>
    <property type="match status" value="1"/>
</dbReference>
<dbReference type="Pfam" id="PF02878">
    <property type="entry name" value="PGM_PMM_I"/>
    <property type="match status" value="1"/>
</dbReference>
<dbReference type="Pfam" id="PF02879">
    <property type="entry name" value="PGM_PMM_II"/>
    <property type="match status" value="1"/>
</dbReference>
<dbReference type="Pfam" id="PF02880">
    <property type="entry name" value="PGM_PMM_III"/>
    <property type="match status" value="1"/>
</dbReference>
<dbReference type="Pfam" id="PF00408">
    <property type="entry name" value="PGM_PMM_IV"/>
    <property type="match status" value="1"/>
</dbReference>
<dbReference type="PRINTS" id="PR00509">
    <property type="entry name" value="PGMPMM"/>
</dbReference>
<dbReference type="SUPFAM" id="SSF55957">
    <property type="entry name" value="Phosphoglucomutase, C-terminal domain"/>
    <property type="match status" value="1"/>
</dbReference>
<dbReference type="SUPFAM" id="SSF53738">
    <property type="entry name" value="Phosphoglucomutase, first 3 domains"/>
    <property type="match status" value="3"/>
</dbReference>
<dbReference type="PROSITE" id="PS00710">
    <property type="entry name" value="PGM_PMM"/>
    <property type="match status" value="1"/>
</dbReference>
<organism>
    <name type="scientific">Haemophilus influenzae (strain ATCC 51907 / DSM 11121 / KW20 / Rd)</name>
    <dbReference type="NCBI Taxonomy" id="71421"/>
    <lineage>
        <taxon>Bacteria</taxon>
        <taxon>Pseudomonadati</taxon>
        <taxon>Pseudomonadota</taxon>
        <taxon>Gammaproteobacteria</taxon>
        <taxon>Pasteurellales</taxon>
        <taxon>Pasteurellaceae</taxon>
        <taxon>Haemophilus</taxon>
    </lineage>
</organism>
<evidence type="ECO:0000250" key="1"/>
<evidence type="ECO:0000305" key="2"/>
<feature type="chain" id="PRO_0000148021" description="Probable phosphomannomutase">
    <location>
        <begin position="1"/>
        <end position="485"/>
    </location>
</feature>
<feature type="active site" description="Phosphoserine intermediate" evidence="1">
    <location>
        <position position="86"/>
    </location>
</feature>
<feature type="binding site" description="via phosphate group" evidence="1">
    <location>
        <position position="86"/>
    </location>
    <ligand>
        <name>Mg(2+)</name>
        <dbReference type="ChEBI" id="CHEBI:18420"/>
    </ligand>
</feature>
<feature type="binding site" evidence="1">
    <location>
        <position position="236"/>
    </location>
    <ligand>
        <name>Mg(2+)</name>
        <dbReference type="ChEBI" id="CHEBI:18420"/>
    </ligand>
</feature>
<feature type="binding site" evidence="1">
    <location>
        <position position="238"/>
    </location>
    <ligand>
        <name>Mg(2+)</name>
        <dbReference type="ChEBI" id="CHEBI:18420"/>
    </ligand>
</feature>
<feature type="binding site" evidence="1">
    <location>
        <position position="240"/>
    </location>
    <ligand>
        <name>Mg(2+)</name>
        <dbReference type="ChEBI" id="CHEBI:18420"/>
    </ligand>
</feature>
<gene>
    <name type="ordered locus">HI_0740</name>
</gene>
<name>Y740_HAEIN</name>
<keyword id="KW-0413">Isomerase</keyword>
<keyword id="KW-0460">Magnesium</keyword>
<keyword id="KW-0479">Metal-binding</keyword>
<keyword id="KW-0597">Phosphoprotein</keyword>
<keyword id="KW-1185">Reference proteome</keyword>